<protein>
    <recommendedName>
        <fullName>EKC/KEOPS complex subunit bud32</fullName>
        <ecNumber evidence="2">3.6.-.-</ecNumber>
    </recommendedName>
    <alternativeName>
        <fullName>Atypical serine/threonine protein kinase bud32</fullName>
        <ecNumber evidence="1">2.7.11.1</ecNumber>
    </alternativeName>
</protein>
<gene>
    <name type="primary">bud32</name>
    <name type="ORF">ACLA_041780</name>
</gene>
<name>BUD32_ASPCL</name>
<keyword id="KW-0010">Activator</keyword>
<keyword id="KW-0067">ATP-binding</keyword>
<keyword id="KW-0158">Chromosome</keyword>
<keyword id="KW-0963">Cytoplasm</keyword>
<keyword id="KW-0378">Hydrolase</keyword>
<keyword id="KW-0418">Kinase</keyword>
<keyword id="KW-0547">Nucleotide-binding</keyword>
<keyword id="KW-0539">Nucleus</keyword>
<keyword id="KW-0597">Phosphoprotein</keyword>
<keyword id="KW-1185">Reference proteome</keyword>
<keyword id="KW-0723">Serine/threonine-protein kinase</keyword>
<keyword id="KW-0779">Telomere</keyword>
<keyword id="KW-0804">Transcription</keyword>
<keyword id="KW-0805">Transcription regulation</keyword>
<keyword id="KW-0808">Transferase</keyword>
<keyword id="KW-0819">tRNA processing</keyword>
<feature type="chain" id="PRO_0000278905" description="EKC/KEOPS complex subunit bud32">
    <location>
        <begin position="1"/>
        <end position="277"/>
    </location>
</feature>
<feature type="domain" description="Protein kinase" evidence="3">
    <location>
        <begin position="20"/>
        <end position="277"/>
    </location>
</feature>
<feature type="region of interest" description="Disordered" evidence="5">
    <location>
        <begin position="1"/>
        <end position="23"/>
    </location>
</feature>
<feature type="compositionally biased region" description="Pro residues" evidence="5">
    <location>
        <begin position="7"/>
        <end position="23"/>
    </location>
</feature>
<feature type="active site" description="Proton acceptor" evidence="3 4">
    <location>
        <position position="172"/>
    </location>
</feature>
<feature type="binding site" evidence="3">
    <location>
        <begin position="26"/>
        <end position="34"/>
    </location>
    <ligand>
        <name>ATP</name>
        <dbReference type="ChEBI" id="CHEBI:30616"/>
    </ligand>
</feature>
<feature type="binding site" evidence="3">
    <location>
        <position position="49"/>
    </location>
    <ligand>
        <name>ATP</name>
        <dbReference type="ChEBI" id="CHEBI:30616"/>
    </ligand>
</feature>
<comment type="function">
    <text evidence="1">Component of the EKC/KEOPS complex that is required for the formation of a threonylcarbamoyl group on adenosine at position 37 (t(6)A37) in tRNAs that read codons beginning with adenine. The complex is probably involved in the transfer of the threonylcarbamoyl moiety of threonylcarbamoyl-AMP (TC-AMP) to the N6 group of A37. BUD32 has ATPase activity in the context of the EKC/KEOPS complex and likely plays a supporting role to the catalytic subunit KAE1. The EKC/KEOPS complex also promotes both telomere uncapping and telomere elongation. The complex is required for efficient recruitment of transcriptional coactivators.</text>
</comment>
<comment type="catalytic activity">
    <reaction evidence="1">
        <text>L-seryl-[protein] + ATP = O-phospho-L-seryl-[protein] + ADP + H(+)</text>
        <dbReference type="Rhea" id="RHEA:17989"/>
        <dbReference type="Rhea" id="RHEA-COMP:9863"/>
        <dbReference type="Rhea" id="RHEA-COMP:11604"/>
        <dbReference type="ChEBI" id="CHEBI:15378"/>
        <dbReference type="ChEBI" id="CHEBI:29999"/>
        <dbReference type="ChEBI" id="CHEBI:30616"/>
        <dbReference type="ChEBI" id="CHEBI:83421"/>
        <dbReference type="ChEBI" id="CHEBI:456216"/>
        <dbReference type="EC" id="2.7.11.1"/>
    </reaction>
</comment>
<comment type="catalytic activity">
    <reaction evidence="1">
        <text>L-threonyl-[protein] + ATP = O-phospho-L-threonyl-[protein] + ADP + H(+)</text>
        <dbReference type="Rhea" id="RHEA:46608"/>
        <dbReference type="Rhea" id="RHEA-COMP:11060"/>
        <dbReference type="Rhea" id="RHEA-COMP:11605"/>
        <dbReference type="ChEBI" id="CHEBI:15378"/>
        <dbReference type="ChEBI" id="CHEBI:30013"/>
        <dbReference type="ChEBI" id="CHEBI:30616"/>
        <dbReference type="ChEBI" id="CHEBI:61977"/>
        <dbReference type="ChEBI" id="CHEBI:456216"/>
        <dbReference type="EC" id="2.7.11.1"/>
    </reaction>
</comment>
<comment type="subunit">
    <text evidence="1">Component of the EKC/KEOPS complex composed of at least Bud32, cgi121, gon7, kae1 and pcc1; the whole complex dimerizes.</text>
</comment>
<comment type="subcellular location">
    <subcellularLocation>
        <location evidence="1">Cytoplasm</location>
    </subcellularLocation>
    <subcellularLocation>
        <location evidence="1">Nucleus</location>
    </subcellularLocation>
    <subcellularLocation>
        <location evidence="1">Chromosome</location>
        <location evidence="1">Telomere</location>
    </subcellularLocation>
</comment>
<comment type="domain">
    <text evidence="1 2">This protein is considered an atypical serine/threonine kinase, because it lacks the conventional structural elements necessary for the substrate recognition as well as a lysine residue that in all other serine/threonine kinases participates in the catalytic event (By similarity). BUD32 has protein kinase activity in vitro, but in the context of the EKC/KEOPS complex, the catalytic subunit KAE1 switches the activity of BUD32 from kinase into ATPase (By similarity).</text>
</comment>
<comment type="similarity">
    <text evidence="6">Belongs to the protein kinase superfamily. BUD32 family.</text>
</comment>
<reference key="1">
    <citation type="journal article" date="2008" name="PLoS Genet.">
        <title>Genomic islands in the pathogenic filamentous fungus Aspergillus fumigatus.</title>
        <authorList>
            <person name="Fedorova N.D."/>
            <person name="Khaldi N."/>
            <person name="Joardar V.S."/>
            <person name="Maiti R."/>
            <person name="Amedeo P."/>
            <person name="Anderson M.J."/>
            <person name="Crabtree J."/>
            <person name="Silva J.C."/>
            <person name="Badger J.H."/>
            <person name="Albarraq A."/>
            <person name="Angiuoli S."/>
            <person name="Bussey H."/>
            <person name="Bowyer P."/>
            <person name="Cotty P.J."/>
            <person name="Dyer P.S."/>
            <person name="Egan A."/>
            <person name="Galens K."/>
            <person name="Fraser-Liggett C.M."/>
            <person name="Haas B.J."/>
            <person name="Inman J.M."/>
            <person name="Kent R."/>
            <person name="Lemieux S."/>
            <person name="Malavazi I."/>
            <person name="Orvis J."/>
            <person name="Roemer T."/>
            <person name="Ronning C.M."/>
            <person name="Sundaram J.P."/>
            <person name="Sutton G."/>
            <person name="Turner G."/>
            <person name="Venter J.C."/>
            <person name="White O.R."/>
            <person name="Whitty B.R."/>
            <person name="Youngman P."/>
            <person name="Wolfe K.H."/>
            <person name="Goldman G.H."/>
            <person name="Wortman J.R."/>
            <person name="Jiang B."/>
            <person name="Denning D.W."/>
            <person name="Nierman W.C."/>
        </authorList>
    </citation>
    <scope>NUCLEOTIDE SEQUENCE [LARGE SCALE GENOMIC DNA]</scope>
    <source>
        <strain>ATCC 1007 / CBS 513.65 / DSM 816 / NCTC 3887 / NRRL 1 / QM 1276 / 107</strain>
    </source>
</reference>
<sequence length="277" mass="31061">MSSAEPYTPPPLPSPFTNTTPPPQLLTQGAEAHLYKTVFLSPSTPAALKVRPSKPYRHPILDRRLTRQRILQEARCLVKLVREGVNVPAVLALDWEGQNTEKGFGGAWLMMEWVEGLVVRVVLERWERWMKRNQGSSGAEELKEEENWVRDLLRRIGRAVGALHKAGVIHGDLTTSNLILRPPGHVGEQADTGESSPSMEGDVVLIDFGLASQSLQDEDRAVDLYVLERAFGSTHPRTEPFFEEVLNGYRESYKGASSALKRLEDVRMRGRKRSMIG</sequence>
<evidence type="ECO:0000250" key="1">
    <source>
        <dbReference type="UniProtKB" id="P53323"/>
    </source>
</evidence>
<evidence type="ECO:0000250" key="2">
    <source>
        <dbReference type="UniProtKB" id="Q9UYB9"/>
    </source>
</evidence>
<evidence type="ECO:0000255" key="3">
    <source>
        <dbReference type="PROSITE-ProRule" id="PRU00159"/>
    </source>
</evidence>
<evidence type="ECO:0000255" key="4">
    <source>
        <dbReference type="PROSITE-ProRule" id="PRU10028"/>
    </source>
</evidence>
<evidence type="ECO:0000256" key="5">
    <source>
        <dbReference type="SAM" id="MobiDB-lite"/>
    </source>
</evidence>
<evidence type="ECO:0000305" key="6"/>
<proteinExistence type="inferred from homology"/>
<dbReference type="EC" id="3.6.-.-" evidence="2"/>
<dbReference type="EC" id="2.7.11.1" evidence="1"/>
<dbReference type="EMBL" id="DS027056">
    <property type="protein sequence ID" value="EAW09956.1"/>
    <property type="molecule type" value="Genomic_DNA"/>
</dbReference>
<dbReference type="RefSeq" id="XP_001271382.1">
    <property type="nucleotide sequence ID" value="XM_001271381.1"/>
</dbReference>
<dbReference type="SMR" id="A1CLD2"/>
<dbReference type="STRING" id="344612.A1CLD2"/>
<dbReference type="EnsemblFungi" id="EAW09956">
    <property type="protein sequence ID" value="EAW09956"/>
    <property type="gene ID" value="ACLA_041780"/>
</dbReference>
<dbReference type="GeneID" id="4703225"/>
<dbReference type="KEGG" id="act:ACLA_041780"/>
<dbReference type="VEuPathDB" id="FungiDB:ACLA_041780"/>
<dbReference type="eggNOG" id="KOG3087">
    <property type="taxonomic scope" value="Eukaryota"/>
</dbReference>
<dbReference type="HOGENOM" id="CLU_063953_1_0_1"/>
<dbReference type="OMA" id="HKLYMEY"/>
<dbReference type="OrthoDB" id="3399at2759"/>
<dbReference type="Proteomes" id="UP000006701">
    <property type="component" value="Unassembled WGS sequence"/>
</dbReference>
<dbReference type="GO" id="GO:0000781">
    <property type="term" value="C:chromosome, telomeric region"/>
    <property type="evidence" value="ECO:0007669"/>
    <property type="project" value="UniProtKB-SubCell"/>
</dbReference>
<dbReference type="GO" id="GO:0005829">
    <property type="term" value="C:cytosol"/>
    <property type="evidence" value="ECO:0007669"/>
    <property type="project" value="TreeGrafter"/>
</dbReference>
<dbReference type="GO" id="GO:0000408">
    <property type="term" value="C:EKC/KEOPS complex"/>
    <property type="evidence" value="ECO:0007669"/>
    <property type="project" value="TreeGrafter"/>
</dbReference>
<dbReference type="GO" id="GO:0005634">
    <property type="term" value="C:nucleus"/>
    <property type="evidence" value="ECO:0007669"/>
    <property type="project" value="UniProtKB-SubCell"/>
</dbReference>
<dbReference type="GO" id="GO:0005524">
    <property type="term" value="F:ATP binding"/>
    <property type="evidence" value="ECO:0007669"/>
    <property type="project" value="UniProtKB-KW"/>
</dbReference>
<dbReference type="GO" id="GO:0016787">
    <property type="term" value="F:hydrolase activity"/>
    <property type="evidence" value="ECO:0007669"/>
    <property type="project" value="UniProtKB-KW"/>
</dbReference>
<dbReference type="GO" id="GO:0106310">
    <property type="term" value="F:protein serine kinase activity"/>
    <property type="evidence" value="ECO:0007669"/>
    <property type="project" value="RHEA"/>
</dbReference>
<dbReference type="GO" id="GO:0004674">
    <property type="term" value="F:protein serine/threonine kinase activity"/>
    <property type="evidence" value="ECO:0007669"/>
    <property type="project" value="UniProtKB-KW"/>
</dbReference>
<dbReference type="GO" id="GO:0008033">
    <property type="term" value="P:tRNA processing"/>
    <property type="evidence" value="ECO:0007669"/>
    <property type="project" value="UniProtKB-KW"/>
</dbReference>
<dbReference type="GO" id="GO:0070525">
    <property type="term" value="P:tRNA threonylcarbamoyladenosine metabolic process"/>
    <property type="evidence" value="ECO:0007669"/>
    <property type="project" value="TreeGrafter"/>
</dbReference>
<dbReference type="FunFam" id="3.30.200.20:FF:000603">
    <property type="entry name" value="EKC/KEOPS complex subunit bud32"/>
    <property type="match status" value="1"/>
</dbReference>
<dbReference type="FunFam" id="1.10.510.10:FF:000845">
    <property type="entry name" value="Probable bifunctional tRNA threonylcarbamoyladenosine biosynthesis protein"/>
    <property type="match status" value="1"/>
</dbReference>
<dbReference type="Gene3D" id="3.30.200.20">
    <property type="entry name" value="Phosphorylase Kinase, domain 1"/>
    <property type="match status" value="1"/>
</dbReference>
<dbReference type="Gene3D" id="1.10.510.10">
    <property type="entry name" value="Transferase(Phosphotransferase) domain 1"/>
    <property type="match status" value="1"/>
</dbReference>
<dbReference type="InterPro" id="IPR022495">
    <property type="entry name" value="Bud32"/>
</dbReference>
<dbReference type="InterPro" id="IPR011009">
    <property type="entry name" value="Kinase-like_dom_sf"/>
</dbReference>
<dbReference type="InterPro" id="IPR000719">
    <property type="entry name" value="Prot_kinase_dom"/>
</dbReference>
<dbReference type="InterPro" id="IPR008266">
    <property type="entry name" value="Tyr_kinase_AS"/>
</dbReference>
<dbReference type="NCBIfam" id="TIGR03724">
    <property type="entry name" value="arch_bud32"/>
    <property type="match status" value="1"/>
</dbReference>
<dbReference type="PANTHER" id="PTHR12209:SF0">
    <property type="entry name" value="EKC_KEOPS COMPLEX SUBUNIT TP53RK"/>
    <property type="match status" value="1"/>
</dbReference>
<dbReference type="PANTHER" id="PTHR12209">
    <property type="entry name" value="NON-SPECIFIC SERINE/THREONINE PROTEIN KINASE"/>
    <property type="match status" value="1"/>
</dbReference>
<dbReference type="Pfam" id="PF06293">
    <property type="entry name" value="Kdo"/>
    <property type="match status" value="1"/>
</dbReference>
<dbReference type="SMART" id="SM00220">
    <property type="entry name" value="S_TKc"/>
    <property type="match status" value="1"/>
</dbReference>
<dbReference type="SUPFAM" id="SSF56112">
    <property type="entry name" value="Protein kinase-like (PK-like)"/>
    <property type="match status" value="1"/>
</dbReference>
<dbReference type="PROSITE" id="PS50011">
    <property type="entry name" value="PROTEIN_KINASE_DOM"/>
    <property type="match status" value="1"/>
</dbReference>
<dbReference type="PROSITE" id="PS00109">
    <property type="entry name" value="PROTEIN_KINASE_TYR"/>
    <property type="match status" value="1"/>
</dbReference>
<accession>A1CLD2</accession>
<organism>
    <name type="scientific">Aspergillus clavatus (strain ATCC 1007 / CBS 513.65 / DSM 816 / NCTC 3887 / NRRL 1 / QM 1276 / 107)</name>
    <dbReference type="NCBI Taxonomy" id="344612"/>
    <lineage>
        <taxon>Eukaryota</taxon>
        <taxon>Fungi</taxon>
        <taxon>Dikarya</taxon>
        <taxon>Ascomycota</taxon>
        <taxon>Pezizomycotina</taxon>
        <taxon>Eurotiomycetes</taxon>
        <taxon>Eurotiomycetidae</taxon>
        <taxon>Eurotiales</taxon>
        <taxon>Aspergillaceae</taxon>
        <taxon>Aspergillus</taxon>
        <taxon>Aspergillus subgen. Fumigati</taxon>
    </lineage>
</organism>